<accession>B3GZ41</accession>
<dbReference type="EMBL" id="CP001091">
    <property type="protein sequence ID" value="ACE62527.1"/>
    <property type="molecule type" value="Genomic_DNA"/>
</dbReference>
<dbReference type="RefSeq" id="WP_005599346.1">
    <property type="nucleotide sequence ID" value="NC_010939.1"/>
</dbReference>
<dbReference type="SMR" id="B3GZ41"/>
<dbReference type="GeneID" id="48600082"/>
<dbReference type="KEGG" id="apa:APP7_1875"/>
<dbReference type="HOGENOM" id="CLU_103507_2_2_6"/>
<dbReference type="Proteomes" id="UP000001226">
    <property type="component" value="Chromosome"/>
</dbReference>
<dbReference type="GO" id="GO:0022625">
    <property type="term" value="C:cytosolic large ribosomal subunit"/>
    <property type="evidence" value="ECO:0007669"/>
    <property type="project" value="TreeGrafter"/>
</dbReference>
<dbReference type="GO" id="GO:0003735">
    <property type="term" value="F:structural constituent of ribosome"/>
    <property type="evidence" value="ECO:0007669"/>
    <property type="project" value="InterPro"/>
</dbReference>
<dbReference type="GO" id="GO:0006412">
    <property type="term" value="P:translation"/>
    <property type="evidence" value="ECO:0007669"/>
    <property type="project" value="UniProtKB-UniRule"/>
</dbReference>
<dbReference type="FunFam" id="2.30.30.790:FF:000001">
    <property type="entry name" value="50S ribosomal protein L19"/>
    <property type="match status" value="1"/>
</dbReference>
<dbReference type="Gene3D" id="2.30.30.790">
    <property type="match status" value="1"/>
</dbReference>
<dbReference type="HAMAP" id="MF_00402">
    <property type="entry name" value="Ribosomal_bL19"/>
    <property type="match status" value="1"/>
</dbReference>
<dbReference type="InterPro" id="IPR001857">
    <property type="entry name" value="Ribosomal_bL19"/>
</dbReference>
<dbReference type="InterPro" id="IPR018257">
    <property type="entry name" value="Ribosomal_bL19_CS"/>
</dbReference>
<dbReference type="InterPro" id="IPR038657">
    <property type="entry name" value="Ribosomal_bL19_sf"/>
</dbReference>
<dbReference type="InterPro" id="IPR008991">
    <property type="entry name" value="Translation_prot_SH3-like_sf"/>
</dbReference>
<dbReference type="NCBIfam" id="TIGR01024">
    <property type="entry name" value="rplS_bact"/>
    <property type="match status" value="1"/>
</dbReference>
<dbReference type="PANTHER" id="PTHR15680:SF9">
    <property type="entry name" value="LARGE RIBOSOMAL SUBUNIT PROTEIN BL19M"/>
    <property type="match status" value="1"/>
</dbReference>
<dbReference type="PANTHER" id="PTHR15680">
    <property type="entry name" value="RIBOSOMAL PROTEIN L19"/>
    <property type="match status" value="1"/>
</dbReference>
<dbReference type="Pfam" id="PF01245">
    <property type="entry name" value="Ribosomal_L19"/>
    <property type="match status" value="1"/>
</dbReference>
<dbReference type="PIRSF" id="PIRSF002191">
    <property type="entry name" value="Ribosomal_L19"/>
    <property type="match status" value="1"/>
</dbReference>
<dbReference type="PRINTS" id="PR00061">
    <property type="entry name" value="RIBOSOMALL19"/>
</dbReference>
<dbReference type="SUPFAM" id="SSF50104">
    <property type="entry name" value="Translation proteins SH3-like domain"/>
    <property type="match status" value="1"/>
</dbReference>
<dbReference type="PROSITE" id="PS01015">
    <property type="entry name" value="RIBOSOMAL_L19"/>
    <property type="match status" value="1"/>
</dbReference>
<name>RL19_ACTP7</name>
<feature type="chain" id="PRO_1000193781" description="Large ribosomal subunit protein bL19">
    <location>
        <begin position="1"/>
        <end position="116"/>
    </location>
</feature>
<gene>
    <name evidence="1" type="primary">rplS</name>
    <name type="ordered locus">APP7_1875</name>
</gene>
<protein>
    <recommendedName>
        <fullName evidence="1">Large ribosomal subunit protein bL19</fullName>
    </recommendedName>
    <alternativeName>
        <fullName evidence="2">50S ribosomal protein L19</fullName>
    </alternativeName>
</protein>
<evidence type="ECO:0000255" key="1">
    <source>
        <dbReference type="HAMAP-Rule" id="MF_00402"/>
    </source>
</evidence>
<evidence type="ECO:0000305" key="2"/>
<organism>
    <name type="scientific">Actinobacillus pleuropneumoniae serotype 7 (strain AP76)</name>
    <dbReference type="NCBI Taxonomy" id="537457"/>
    <lineage>
        <taxon>Bacteria</taxon>
        <taxon>Pseudomonadati</taxon>
        <taxon>Pseudomonadota</taxon>
        <taxon>Gammaproteobacteria</taxon>
        <taxon>Pasteurellales</taxon>
        <taxon>Pasteurellaceae</taxon>
        <taxon>Actinobacillus</taxon>
    </lineage>
</organism>
<sequence>MSNIIKQIEQEQLKQNVPSFRPGDTLEVKVWVVEGSKRRLQAFEGVVIAIRNRGLHSAFTLRKVSNGVGVERVFQTHSPVVDSISVKRKGAVRKAKLYYLRERSGKSARIKERLGE</sequence>
<comment type="function">
    <text evidence="1">This protein is located at the 30S-50S ribosomal subunit interface and may play a role in the structure and function of the aminoacyl-tRNA binding site.</text>
</comment>
<comment type="similarity">
    <text evidence="1">Belongs to the bacterial ribosomal protein bL19 family.</text>
</comment>
<keyword id="KW-0687">Ribonucleoprotein</keyword>
<keyword id="KW-0689">Ribosomal protein</keyword>
<proteinExistence type="inferred from homology"/>
<reference key="1">
    <citation type="submission" date="2008-06" db="EMBL/GenBank/DDBJ databases">
        <title>Genome and proteome analysis of A. pleuropneumoniae serotype 7.</title>
        <authorList>
            <person name="Linke B."/>
            <person name="Buettner F."/>
            <person name="Martinez-Arias R."/>
            <person name="Goesmann A."/>
            <person name="Baltes N."/>
            <person name="Tegetmeyer H."/>
            <person name="Singh M."/>
            <person name="Gerlach G.F."/>
        </authorList>
    </citation>
    <scope>NUCLEOTIDE SEQUENCE [LARGE SCALE GENOMIC DNA]</scope>
    <source>
        <strain>AP76</strain>
    </source>
</reference>